<keyword id="KW-0150">Chloroplast</keyword>
<keyword id="KW-0472">Membrane</keyword>
<keyword id="KW-0520">NAD</keyword>
<keyword id="KW-0521">NADP</keyword>
<keyword id="KW-0934">Plastid</keyword>
<keyword id="KW-0618">Plastoquinone</keyword>
<keyword id="KW-0874">Quinone</keyword>
<keyword id="KW-0793">Thylakoid</keyword>
<keyword id="KW-1278">Translocase</keyword>
<keyword id="KW-0812">Transmembrane</keyword>
<keyword id="KW-1133">Transmembrane helix</keyword>
<geneLocation type="chloroplast"/>
<name>NU1C_AGRST</name>
<organism>
    <name type="scientific">Agrostis stolonifera</name>
    <name type="common">Creeping bentgrass</name>
    <dbReference type="NCBI Taxonomy" id="63632"/>
    <lineage>
        <taxon>Eukaryota</taxon>
        <taxon>Viridiplantae</taxon>
        <taxon>Streptophyta</taxon>
        <taxon>Embryophyta</taxon>
        <taxon>Tracheophyta</taxon>
        <taxon>Spermatophyta</taxon>
        <taxon>Magnoliopsida</taxon>
        <taxon>Liliopsida</taxon>
        <taxon>Poales</taxon>
        <taxon>Poaceae</taxon>
        <taxon>BOP clade</taxon>
        <taxon>Pooideae</taxon>
        <taxon>Poodae</taxon>
        <taxon>Poeae</taxon>
        <taxon>Poeae Chloroplast Group 1 (Aveneae type)</taxon>
        <taxon>Agrostidodinae</taxon>
        <taxon>Agrostidinae</taxon>
        <taxon>Agrostis</taxon>
    </lineage>
</organism>
<feature type="chain" id="PRO_0000275575" description="NAD(P)H-quinone oxidoreductase subunit 1, chloroplastic">
    <location>
        <begin position="1"/>
        <end position="362"/>
    </location>
</feature>
<feature type="transmembrane region" description="Helical" evidence="1">
    <location>
        <begin position="29"/>
        <end position="49"/>
    </location>
</feature>
<feature type="transmembrane region" description="Helical" evidence="1">
    <location>
        <begin position="103"/>
        <end position="123"/>
    </location>
</feature>
<feature type="transmembrane region" description="Helical" evidence="1">
    <location>
        <begin position="128"/>
        <end position="148"/>
    </location>
</feature>
<feature type="transmembrane region" description="Helical" evidence="1">
    <location>
        <begin position="164"/>
        <end position="184"/>
    </location>
</feature>
<feature type="transmembrane region" description="Helical" evidence="1">
    <location>
        <begin position="202"/>
        <end position="222"/>
    </location>
</feature>
<feature type="transmembrane region" description="Helical" evidence="1">
    <location>
        <begin position="247"/>
        <end position="267"/>
    </location>
</feature>
<feature type="transmembrane region" description="Helical" evidence="1">
    <location>
        <begin position="303"/>
        <end position="323"/>
    </location>
</feature>
<feature type="transmembrane region" description="Helical" evidence="1">
    <location>
        <begin position="335"/>
        <end position="355"/>
    </location>
</feature>
<proteinExistence type="inferred from homology"/>
<comment type="function">
    <text evidence="1">NDH shuttles electrons from NAD(P)H:plastoquinone, via FMN and iron-sulfur (Fe-S) centers, to quinones in the photosynthetic chain and possibly in a chloroplast respiratory chain. The immediate electron acceptor for the enzyme in this species is believed to be plastoquinone. Couples the redox reaction to proton translocation, and thus conserves the redox energy in a proton gradient.</text>
</comment>
<comment type="catalytic activity">
    <reaction evidence="1">
        <text>a plastoquinone + NADH + (n+1) H(+)(in) = a plastoquinol + NAD(+) + n H(+)(out)</text>
        <dbReference type="Rhea" id="RHEA:42608"/>
        <dbReference type="Rhea" id="RHEA-COMP:9561"/>
        <dbReference type="Rhea" id="RHEA-COMP:9562"/>
        <dbReference type="ChEBI" id="CHEBI:15378"/>
        <dbReference type="ChEBI" id="CHEBI:17757"/>
        <dbReference type="ChEBI" id="CHEBI:57540"/>
        <dbReference type="ChEBI" id="CHEBI:57945"/>
        <dbReference type="ChEBI" id="CHEBI:62192"/>
    </reaction>
</comment>
<comment type="catalytic activity">
    <reaction evidence="1">
        <text>a plastoquinone + NADPH + (n+1) H(+)(in) = a plastoquinol + NADP(+) + n H(+)(out)</text>
        <dbReference type="Rhea" id="RHEA:42612"/>
        <dbReference type="Rhea" id="RHEA-COMP:9561"/>
        <dbReference type="Rhea" id="RHEA-COMP:9562"/>
        <dbReference type="ChEBI" id="CHEBI:15378"/>
        <dbReference type="ChEBI" id="CHEBI:17757"/>
        <dbReference type="ChEBI" id="CHEBI:57783"/>
        <dbReference type="ChEBI" id="CHEBI:58349"/>
        <dbReference type="ChEBI" id="CHEBI:62192"/>
    </reaction>
</comment>
<comment type="subunit">
    <text evidence="1">NDH is composed of at least 16 different subunits, 5 of which are encoded in the nucleus.</text>
</comment>
<comment type="subcellular location">
    <subcellularLocation>
        <location evidence="1">Plastid</location>
        <location evidence="1">Chloroplast thylakoid membrane</location>
        <topology evidence="1">Multi-pass membrane protein</topology>
    </subcellularLocation>
</comment>
<comment type="similarity">
    <text evidence="1">Belongs to the complex I subunit 1 family.</text>
</comment>
<accession>A1EA64</accession>
<protein>
    <recommendedName>
        <fullName evidence="1">NAD(P)H-quinone oxidoreductase subunit 1, chloroplastic</fullName>
        <ecNumber evidence="1">7.1.1.-</ecNumber>
    </recommendedName>
    <alternativeName>
        <fullName evidence="1">NAD(P)H dehydrogenase subunit 1</fullName>
        <shortName evidence="1">NDH subunit 1</shortName>
    </alternativeName>
    <alternativeName>
        <fullName evidence="1">NADH-plastoquinone oxidoreductase subunit 1</fullName>
    </alternativeName>
</protein>
<sequence>MIIDRVEVETINSFSKLELLKEVYGLISILPILTLLLGITIEVLVIVWLEREISASIQQRIGPEYAGPLGLLQAIADGTKLLLKEDILPSRGDIPLFSIGPSIAVISILLSFLVIPLGYHFVLADLSIGVFLWIAISSIAPIGLLMAGYSSNNKYSFLGGLRAAAQSISYEIPLTFCVLAISLLSNSSSTVDIVEAQSKYGFFGWNIWRQPIGFLVFLISSLAECERLPFDLPEAEEELVAGYQTEYSGIKYGLFYLVSYLNLLVSSLFVTVLYLGGWNLSIPYISFFDFFQMNNAVGILEMTIGIFITLTKAYLFLFISITIRWTLPRMRMDQLLNLGWKFLLPISLGNLLLTTSSQLVSL</sequence>
<gene>
    <name evidence="1" type="primary">ndhA</name>
</gene>
<reference key="1">
    <citation type="journal article" date="2007" name="Theor. Appl. Genet.">
        <title>Complete chloroplast genome sequences of Hordeum vulgare, Sorghum bicolor and Agrostis stolonifera, and comparative analyses with other grass genomes.</title>
        <authorList>
            <person name="Saski C."/>
            <person name="Lee S.-B."/>
            <person name="Fjellheim S."/>
            <person name="Guda C."/>
            <person name="Jansen R.K."/>
            <person name="Luo H."/>
            <person name="Tomkins J."/>
            <person name="Rognli O.A."/>
            <person name="Daniell H."/>
            <person name="Clarke J.L."/>
        </authorList>
    </citation>
    <scope>NUCLEOTIDE SEQUENCE [LARGE SCALE GENOMIC DNA]</scope>
    <source>
        <strain>cv. Penn A-4</strain>
    </source>
</reference>
<dbReference type="EC" id="7.1.1.-" evidence="1"/>
<dbReference type="EMBL" id="EF115543">
    <property type="protein sequence ID" value="ABK79636.1"/>
    <property type="molecule type" value="Genomic_DNA"/>
</dbReference>
<dbReference type="RefSeq" id="YP_874792.1">
    <property type="nucleotide sequence ID" value="NC_008591.1"/>
</dbReference>
<dbReference type="SMR" id="A1EA64"/>
<dbReference type="GeneID" id="4525041"/>
<dbReference type="GO" id="GO:0009535">
    <property type="term" value="C:chloroplast thylakoid membrane"/>
    <property type="evidence" value="ECO:0007669"/>
    <property type="project" value="UniProtKB-SubCell"/>
</dbReference>
<dbReference type="GO" id="GO:0003954">
    <property type="term" value="F:NADH dehydrogenase activity"/>
    <property type="evidence" value="ECO:0007669"/>
    <property type="project" value="TreeGrafter"/>
</dbReference>
<dbReference type="GO" id="GO:0016655">
    <property type="term" value="F:oxidoreductase activity, acting on NAD(P)H, quinone or similar compound as acceptor"/>
    <property type="evidence" value="ECO:0007669"/>
    <property type="project" value="UniProtKB-UniRule"/>
</dbReference>
<dbReference type="GO" id="GO:0048038">
    <property type="term" value="F:quinone binding"/>
    <property type="evidence" value="ECO:0007669"/>
    <property type="project" value="UniProtKB-KW"/>
</dbReference>
<dbReference type="GO" id="GO:0009060">
    <property type="term" value="P:aerobic respiration"/>
    <property type="evidence" value="ECO:0007669"/>
    <property type="project" value="TreeGrafter"/>
</dbReference>
<dbReference type="GO" id="GO:0019684">
    <property type="term" value="P:photosynthesis, light reaction"/>
    <property type="evidence" value="ECO:0007669"/>
    <property type="project" value="UniProtKB-UniRule"/>
</dbReference>
<dbReference type="HAMAP" id="MF_01350">
    <property type="entry name" value="NDH1_NuoH"/>
    <property type="match status" value="1"/>
</dbReference>
<dbReference type="InterPro" id="IPR001694">
    <property type="entry name" value="NADH_UbQ_OxRdtase_su1/FPO"/>
</dbReference>
<dbReference type="InterPro" id="IPR018086">
    <property type="entry name" value="NADH_UbQ_OxRdtase_su1_CS"/>
</dbReference>
<dbReference type="NCBIfam" id="NF004741">
    <property type="entry name" value="PRK06076.1-2"/>
    <property type="match status" value="1"/>
</dbReference>
<dbReference type="PANTHER" id="PTHR11432">
    <property type="entry name" value="NADH DEHYDROGENASE SUBUNIT 1"/>
    <property type="match status" value="1"/>
</dbReference>
<dbReference type="PANTHER" id="PTHR11432:SF3">
    <property type="entry name" value="NADH-UBIQUINONE OXIDOREDUCTASE CHAIN 1"/>
    <property type="match status" value="1"/>
</dbReference>
<dbReference type="Pfam" id="PF00146">
    <property type="entry name" value="NADHdh"/>
    <property type="match status" value="1"/>
</dbReference>
<dbReference type="PROSITE" id="PS00667">
    <property type="entry name" value="COMPLEX1_ND1_1"/>
    <property type="match status" value="1"/>
</dbReference>
<dbReference type="PROSITE" id="PS00668">
    <property type="entry name" value="COMPLEX1_ND1_2"/>
    <property type="match status" value="1"/>
</dbReference>
<evidence type="ECO:0000255" key="1">
    <source>
        <dbReference type="HAMAP-Rule" id="MF_01350"/>
    </source>
</evidence>